<protein>
    <recommendedName>
        <fullName evidence="1">tRNA pseudouridine synthase B</fullName>
        <ecNumber evidence="1">5.4.99.25</ecNumber>
    </recommendedName>
    <alternativeName>
        <fullName evidence="1">tRNA pseudouridine(55) synthase</fullName>
        <shortName evidence="1">Psi55 synthase</shortName>
    </alternativeName>
    <alternativeName>
        <fullName evidence="1">tRNA pseudouridylate synthase</fullName>
    </alternativeName>
    <alternativeName>
        <fullName evidence="1">tRNA-uridine isomerase</fullName>
    </alternativeName>
</protein>
<reference key="1">
    <citation type="journal article" date="2002" name="Science">
        <title>50 million years of genomic stasis in endosymbiotic bacteria.</title>
        <authorList>
            <person name="Tamas I."/>
            <person name="Klasson L."/>
            <person name="Canbaeck B."/>
            <person name="Naeslund A.K."/>
            <person name="Eriksson A.-S."/>
            <person name="Wernegreen J.J."/>
            <person name="Sandstroem J.P."/>
            <person name="Moran N.A."/>
            <person name="Andersson S.G.E."/>
        </authorList>
    </citation>
    <scope>NUCLEOTIDE SEQUENCE [LARGE SCALE GENOMIC DNA]</scope>
    <source>
        <strain>Sg</strain>
    </source>
</reference>
<proteinExistence type="inferred from homology"/>
<gene>
    <name evidence="1" type="primary">truB</name>
    <name type="ordered locus">BUsg_363</name>
</gene>
<organism>
    <name type="scientific">Buchnera aphidicola subsp. Schizaphis graminum (strain Sg)</name>
    <dbReference type="NCBI Taxonomy" id="198804"/>
    <lineage>
        <taxon>Bacteria</taxon>
        <taxon>Pseudomonadati</taxon>
        <taxon>Pseudomonadota</taxon>
        <taxon>Gammaproteobacteria</taxon>
        <taxon>Enterobacterales</taxon>
        <taxon>Erwiniaceae</taxon>
        <taxon>Buchnera</taxon>
    </lineage>
</organism>
<accession>Q8K9H3</accession>
<feature type="chain" id="PRO_0000121807" description="tRNA pseudouridine synthase B">
    <location>
        <begin position="1"/>
        <end position="312"/>
    </location>
</feature>
<feature type="active site" description="Nucleophile" evidence="1">
    <location>
        <position position="46"/>
    </location>
</feature>
<feature type="binding site" evidence="1">
    <location>
        <position position="74"/>
    </location>
    <ligand>
        <name>substrate</name>
    </ligand>
</feature>
<feature type="binding site" evidence="1">
    <location>
        <position position="177"/>
    </location>
    <ligand>
        <name>substrate</name>
    </ligand>
</feature>
<feature type="binding site" evidence="1">
    <location>
        <position position="198"/>
    </location>
    <ligand>
        <name>substrate</name>
    </ligand>
</feature>
<comment type="function">
    <text evidence="1">Responsible for synthesis of pseudouridine from uracil-55 in the psi GC loop of transfer RNAs.</text>
</comment>
<comment type="catalytic activity">
    <reaction evidence="1">
        <text>uridine(55) in tRNA = pseudouridine(55) in tRNA</text>
        <dbReference type="Rhea" id="RHEA:42532"/>
        <dbReference type="Rhea" id="RHEA-COMP:10101"/>
        <dbReference type="Rhea" id="RHEA-COMP:10102"/>
        <dbReference type="ChEBI" id="CHEBI:65314"/>
        <dbReference type="ChEBI" id="CHEBI:65315"/>
        <dbReference type="EC" id="5.4.99.25"/>
    </reaction>
</comment>
<comment type="similarity">
    <text evidence="1">Belongs to the pseudouridine synthase TruB family. Type 1 subfamily.</text>
</comment>
<name>TRUB_BUCAP</name>
<dbReference type="EC" id="5.4.99.25" evidence="1"/>
<dbReference type="EMBL" id="AE013218">
    <property type="protein sequence ID" value="AAM67916.1"/>
    <property type="molecule type" value="Genomic_DNA"/>
</dbReference>
<dbReference type="RefSeq" id="WP_011053883.1">
    <property type="nucleotide sequence ID" value="NC_004061.1"/>
</dbReference>
<dbReference type="SMR" id="Q8K9H3"/>
<dbReference type="STRING" id="198804.BUsg_363"/>
<dbReference type="GeneID" id="93003833"/>
<dbReference type="KEGG" id="bas:BUsg_363"/>
<dbReference type="eggNOG" id="COG0130">
    <property type="taxonomic scope" value="Bacteria"/>
</dbReference>
<dbReference type="HOGENOM" id="CLU_032087_0_3_6"/>
<dbReference type="Proteomes" id="UP000000416">
    <property type="component" value="Chromosome"/>
</dbReference>
<dbReference type="GO" id="GO:0003723">
    <property type="term" value="F:RNA binding"/>
    <property type="evidence" value="ECO:0007669"/>
    <property type="project" value="InterPro"/>
</dbReference>
<dbReference type="GO" id="GO:0160148">
    <property type="term" value="F:tRNA pseudouridine(55) synthase activity"/>
    <property type="evidence" value="ECO:0007669"/>
    <property type="project" value="UniProtKB-EC"/>
</dbReference>
<dbReference type="GO" id="GO:1990481">
    <property type="term" value="P:mRNA pseudouridine synthesis"/>
    <property type="evidence" value="ECO:0007669"/>
    <property type="project" value="TreeGrafter"/>
</dbReference>
<dbReference type="GO" id="GO:0031119">
    <property type="term" value="P:tRNA pseudouridine synthesis"/>
    <property type="evidence" value="ECO:0007669"/>
    <property type="project" value="UniProtKB-UniRule"/>
</dbReference>
<dbReference type="CDD" id="cd02573">
    <property type="entry name" value="PseudoU_synth_EcTruB"/>
    <property type="match status" value="1"/>
</dbReference>
<dbReference type="CDD" id="cd21152">
    <property type="entry name" value="PUA_TruB_bacterial"/>
    <property type="match status" value="1"/>
</dbReference>
<dbReference type="Gene3D" id="3.30.2350.10">
    <property type="entry name" value="Pseudouridine synthase"/>
    <property type="match status" value="1"/>
</dbReference>
<dbReference type="Gene3D" id="2.30.130.10">
    <property type="entry name" value="PUA domain"/>
    <property type="match status" value="1"/>
</dbReference>
<dbReference type="HAMAP" id="MF_01080">
    <property type="entry name" value="TruB_bact"/>
    <property type="match status" value="1"/>
</dbReference>
<dbReference type="InterPro" id="IPR020103">
    <property type="entry name" value="PsdUridine_synth_cat_dom_sf"/>
</dbReference>
<dbReference type="InterPro" id="IPR002501">
    <property type="entry name" value="PsdUridine_synth_N"/>
</dbReference>
<dbReference type="InterPro" id="IPR015947">
    <property type="entry name" value="PUA-like_sf"/>
</dbReference>
<dbReference type="InterPro" id="IPR036974">
    <property type="entry name" value="PUA_sf"/>
</dbReference>
<dbReference type="InterPro" id="IPR014780">
    <property type="entry name" value="tRNA_psdUridine_synth_TruB"/>
</dbReference>
<dbReference type="InterPro" id="IPR015240">
    <property type="entry name" value="tRNA_sdUridine_synth_fam1_C"/>
</dbReference>
<dbReference type="InterPro" id="IPR032819">
    <property type="entry name" value="TruB_C"/>
</dbReference>
<dbReference type="NCBIfam" id="TIGR00431">
    <property type="entry name" value="TruB"/>
    <property type="match status" value="1"/>
</dbReference>
<dbReference type="PANTHER" id="PTHR13767:SF2">
    <property type="entry name" value="PSEUDOURIDYLATE SYNTHASE TRUB1"/>
    <property type="match status" value="1"/>
</dbReference>
<dbReference type="PANTHER" id="PTHR13767">
    <property type="entry name" value="TRNA-PSEUDOURIDINE SYNTHASE"/>
    <property type="match status" value="1"/>
</dbReference>
<dbReference type="Pfam" id="PF09157">
    <property type="entry name" value="TruB-C_2"/>
    <property type="match status" value="1"/>
</dbReference>
<dbReference type="Pfam" id="PF16198">
    <property type="entry name" value="TruB_C_2"/>
    <property type="match status" value="1"/>
</dbReference>
<dbReference type="Pfam" id="PF01509">
    <property type="entry name" value="TruB_N"/>
    <property type="match status" value="1"/>
</dbReference>
<dbReference type="SUPFAM" id="SSF55120">
    <property type="entry name" value="Pseudouridine synthase"/>
    <property type="match status" value="1"/>
</dbReference>
<dbReference type="SUPFAM" id="SSF88697">
    <property type="entry name" value="PUA domain-like"/>
    <property type="match status" value="1"/>
</dbReference>
<evidence type="ECO:0000255" key="1">
    <source>
        <dbReference type="HAMAP-Rule" id="MF_01080"/>
    </source>
</evidence>
<keyword id="KW-0413">Isomerase</keyword>
<keyword id="KW-0819">tRNA processing</keyword>
<sequence>MFFHKKRNVNGFLLLDKPKGMTSNNVLQKVKIIFKAKKAGYIGTLDPLATGILPICFGEATKFSNYLNASDKHYNVIARLGEKTSTSDSDGIIVRKRPILFTPIQLSLALKALTGSVNQIPSMYSAVKYKGIPLYKYARQGINVKRNIRCVFIYKIDLVDQKDNWIELNVHCSKGTYIRTLIEDLGEKLFCGAHVIRLRRLKIGLLSYSKLVKLSFLENLLNEKNVVKINFFKKIDDLLMPVDTPVYFLPKIYISIEKLSVFRLGQKVNFSSSITNGLVRVFEKDNNTFIGLGKINSEKTLIPYRLVSMLTN</sequence>